<proteinExistence type="inferred from homology"/>
<dbReference type="EC" id="2.1.2.11" evidence="1"/>
<dbReference type="EMBL" id="CP000924">
    <property type="protein sequence ID" value="ABY95444.1"/>
    <property type="molecule type" value="Genomic_DNA"/>
</dbReference>
<dbReference type="RefSeq" id="WP_009051762.1">
    <property type="nucleotide sequence ID" value="NC_010321.1"/>
</dbReference>
<dbReference type="SMR" id="B0KC90"/>
<dbReference type="STRING" id="340099.Teth39_1808"/>
<dbReference type="KEGG" id="tpd:Teth39_1808"/>
<dbReference type="eggNOG" id="COG0413">
    <property type="taxonomic scope" value="Bacteria"/>
</dbReference>
<dbReference type="HOGENOM" id="CLU_036645_1_0_9"/>
<dbReference type="UniPathway" id="UPA00028">
    <property type="reaction ID" value="UER00003"/>
</dbReference>
<dbReference type="Proteomes" id="UP000002156">
    <property type="component" value="Chromosome"/>
</dbReference>
<dbReference type="GO" id="GO:0005737">
    <property type="term" value="C:cytoplasm"/>
    <property type="evidence" value="ECO:0007669"/>
    <property type="project" value="UniProtKB-SubCell"/>
</dbReference>
<dbReference type="GO" id="GO:0003864">
    <property type="term" value="F:3-methyl-2-oxobutanoate hydroxymethyltransferase activity"/>
    <property type="evidence" value="ECO:0007669"/>
    <property type="project" value="UniProtKB-UniRule"/>
</dbReference>
<dbReference type="GO" id="GO:0000287">
    <property type="term" value="F:magnesium ion binding"/>
    <property type="evidence" value="ECO:0007669"/>
    <property type="project" value="TreeGrafter"/>
</dbReference>
<dbReference type="GO" id="GO:0015940">
    <property type="term" value="P:pantothenate biosynthetic process"/>
    <property type="evidence" value="ECO:0007669"/>
    <property type="project" value="UniProtKB-UniRule"/>
</dbReference>
<dbReference type="CDD" id="cd06557">
    <property type="entry name" value="KPHMT-like"/>
    <property type="match status" value="1"/>
</dbReference>
<dbReference type="FunFam" id="3.20.20.60:FF:000003">
    <property type="entry name" value="3-methyl-2-oxobutanoate hydroxymethyltransferase"/>
    <property type="match status" value="1"/>
</dbReference>
<dbReference type="Gene3D" id="3.20.20.60">
    <property type="entry name" value="Phosphoenolpyruvate-binding domains"/>
    <property type="match status" value="1"/>
</dbReference>
<dbReference type="HAMAP" id="MF_00156">
    <property type="entry name" value="PanB"/>
    <property type="match status" value="1"/>
</dbReference>
<dbReference type="InterPro" id="IPR003700">
    <property type="entry name" value="Pantoate_hydroxy_MeTrfase"/>
</dbReference>
<dbReference type="InterPro" id="IPR015813">
    <property type="entry name" value="Pyrv/PenolPyrv_kinase-like_dom"/>
</dbReference>
<dbReference type="InterPro" id="IPR040442">
    <property type="entry name" value="Pyrv_kinase-like_dom_sf"/>
</dbReference>
<dbReference type="NCBIfam" id="TIGR00222">
    <property type="entry name" value="panB"/>
    <property type="match status" value="1"/>
</dbReference>
<dbReference type="NCBIfam" id="NF001452">
    <property type="entry name" value="PRK00311.1"/>
    <property type="match status" value="1"/>
</dbReference>
<dbReference type="PANTHER" id="PTHR20881">
    <property type="entry name" value="3-METHYL-2-OXOBUTANOATE HYDROXYMETHYLTRANSFERASE"/>
    <property type="match status" value="1"/>
</dbReference>
<dbReference type="PANTHER" id="PTHR20881:SF0">
    <property type="entry name" value="3-METHYL-2-OXOBUTANOATE HYDROXYMETHYLTRANSFERASE"/>
    <property type="match status" value="1"/>
</dbReference>
<dbReference type="Pfam" id="PF02548">
    <property type="entry name" value="Pantoate_transf"/>
    <property type="match status" value="1"/>
</dbReference>
<dbReference type="PIRSF" id="PIRSF000388">
    <property type="entry name" value="Pantoate_hydroxy_MeTrfase"/>
    <property type="match status" value="1"/>
</dbReference>
<dbReference type="SUPFAM" id="SSF51621">
    <property type="entry name" value="Phosphoenolpyruvate/pyruvate domain"/>
    <property type="match status" value="1"/>
</dbReference>
<keyword id="KW-0963">Cytoplasm</keyword>
<keyword id="KW-0460">Magnesium</keyword>
<keyword id="KW-0479">Metal-binding</keyword>
<keyword id="KW-0566">Pantothenate biosynthesis</keyword>
<keyword id="KW-1185">Reference proteome</keyword>
<keyword id="KW-0808">Transferase</keyword>
<name>PANB_THEP3</name>
<reference key="1">
    <citation type="submission" date="2008-01" db="EMBL/GenBank/DDBJ databases">
        <title>Complete sequence of Thermoanaerobacter pseudethanolicus 39E.</title>
        <authorList>
            <person name="Copeland A."/>
            <person name="Lucas S."/>
            <person name="Lapidus A."/>
            <person name="Barry K."/>
            <person name="Glavina del Rio T."/>
            <person name="Dalin E."/>
            <person name="Tice H."/>
            <person name="Pitluck S."/>
            <person name="Bruce D."/>
            <person name="Goodwin L."/>
            <person name="Saunders E."/>
            <person name="Brettin T."/>
            <person name="Detter J.C."/>
            <person name="Han C."/>
            <person name="Schmutz J."/>
            <person name="Larimer F."/>
            <person name="Land M."/>
            <person name="Hauser L."/>
            <person name="Kyrpides N."/>
            <person name="Lykidis A."/>
            <person name="Hemme C."/>
            <person name="Fields M.W."/>
            <person name="He Z."/>
            <person name="Zhou J."/>
            <person name="Richardson P."/>
        </authorList>
    </citation>
    <scope>NUCLEOTIDE SEQUENCE [LARGE SCALE GENOMIC DNA]</scope>
    <source>
        <strain>ATCC 33223 / DSM 2355 / 39E</strain>
    </source>
</reference>
<organism>
    <name type="scientific">Thermoanaerobacter pseudethanolicus (strain ATCC 33223 / 39E)</name>
    <name type="common">Clostridium thermohydrosulfuricum</name>
    <dbReference type="NCBI Taxonomy" id="340099"/>
    <lineage>
        <taxon>Bacteria</taxon>
        <taxon>Bacillati</taxon>
        <taxon>Bacillota</taxon>
        <taxon>Clostridia</taxon>
        <taxon>Thermoanaerobacterales</taxon>
        <taxon>Thermoanaerobacteraceae</taxon>
        <taxon>Thermoanaerobacter</taxon>
    </lineage>
</organism>
<accession>B0KC90</accession>
<sequence>MEEKVSTLTLRKFKKEGRKITALTAYDFPTAKILDNCGIDMILVGDSLGMVVLGYESTIPVTMEDMIHHTKAVSRAVNRAFIVADMPFMSYHISKEQAMTNAARLIAEGGAHAVKLEGGEEIASIVKAIVDAGIPVVGHLGLTPQSVHQLGGYKVQGKEKEQAKKIFNDAKVLEQAGICALVLESIPMELAKNITENISVPTIGIGAGPYCDGQILVTHDMLGITQGHRPKFVKQYADIEKIMIDGINAYIKEVQQVLFPDEEHSFTLEKRENK</sequence>
<feature type="chain" id="PRO_1000097013" description="3-methyl-2-oxobutanoate hydroxymethyltransferase">
    <location>
        <begin position="1"/>
        <end position="274"/>
    </location>
</feature>
<feature type="active site" description="Proton acceptor" evidence="1">
    <location>
        <position position="184"/>
    </location>
</feature>
<feature type="binding site" evidence="1">
    <location>
        <begin position="46"/>
        <end position="47"/>
    </location>
    <ligand>
        <name>3-methyl-2-oxobutanoate</name>
        <dbReference type="ChEBI" id="CHEBI:11851"/>
    </ligand>
</feature>
<feature type="binding site" evidence="1">
    <location>
        <position position="46"/>
    </location>
    <ligand>
        <name>Mg(2+)</name>
        <dbReference type="ChEBI" id="CHEBI:18420"/>
    </ligand>
</feature>
<feature type="binding site" evidence="1">
    <location>
        <position position="85"/>
    </location>
    <ligand>
        <name>3-methyl-2-oxobutanoate</name>
        <dbReference type="ChEBI" id="CHEBI:11851"/>
    </ligand>
</feature>
<feature type="binding site" evidence="1">
    <location>
        <position position="85"/>
    </location>
    <ligand>
        <name>Mg(2+)</name>
        <dbReference type="ChEBI" id="CHEBI:18420"/>
    </ligand>
</feature>
<feature type="binding site" evidence="1">
    <location>
        <position position="115"/>
    </location>
    <ligand>
        <name>3-methyl-2-oxobutanoate</name>
        <dbReference type="ChEBI" id="CHEBI:11851"/>
    </ligand>
</feature>
<feature type="binding site" evidence="1">
    <location>
        <position position="117"/>
    </location>
    <ligand>
        <name>Mg(2+)</name>
        <dbReference type="ChEBI" id="CHEBI:18420"/>
    </ligand>
</feature>
<protein>
    <recommendedName>
        <fullName evidence="1">3-methyl-2-oxobutanoate hydroxymethyltransferase</fullName>
        <ecNumber evidence="1">2.1.2.11</ecNumber>
    </recommendedName>
    <alternativeName>
        <fullName evidence="1">Ketopantoate hydroxymethyltransferase</fullName>
        <shortName evidence="1">KPHMT</shortName>
    </alternativeName>
</protein>
<gene>
    <name evidence="1" type="primary">panB</name>
    <name type="ordered locus">Teth39_1808</name>
</gene>
<evidence type="ECO:0000255" key="1">
    <source>
        <dbReference type="HAMAP-Rule" id="MF_00156"/>
    </source>
</evidence>
<comment type="function">
    <text evidence="1">Catalyzes the reversible reaction in which hydroxymethyl group from 5,10-methylenetetrahydrofolate is transferred onto alpha-ketoisovalerate to form ketopantoate.</text>
</comment>
<comment type="catalytic activity">
    <reaction evidence="1">
        <text>3-methyl-2-oxobutanoate + (6R)-5,10-methylene-5,6,7,8-tetrahydrofolate + H2O = 2-dehydropantoate + (6S)-5,6,7,8-tetrahydrofolate</text>
        <dbReference type="Rhea" id="RHEA:11824"/>
        <dbReference type="ChEBI" id="CHEBI:11561"/>
        <dbReference type="ChEBI" id="CHEBI:11851"/>
        <dbReference type="ChEBI" id="CHEBI:15377"/>
        <dbReference type="ChEBI" id="CHEBI:15636"/>
        <dbReference type="ChEBI" id="CHEBI:57453"/>
        <dbReference type="EC" id="2.1.2.11"/>
    </reaction>
</comment>
<comment type="cofactor">
    <cofactor evidence="1">
        <name>Mg(2+)</name>
        <dbReference type="ChEBI" id="CHEBI:18420"/>
    </cofactor>
    <text evidence="1">Binds 1 Mg(2+) ion per subunit.</text>
</comment>
<comment type="pathway">
    <text evidence="1">Cofactor biosynthesis; (R)-pantothenate biosynthesis; (R)-pantoate from 3-methyl-2-oxobutanoate: step 1/2.</text>
</comment>
<comment type="subunit">
    <text evidence="1">Homodecamer; pentamer of dimers.</text>
</comment>
<comment type="subcellular location">
    <subcellularLocation>
        <location evidence="1">Cytoplasm</location>
    </subcellularLocation>
</comment>
<comment type="similarity">
    <text evidence="1">Belongs to the PanB family.</text>
</comment>